<gene>
    <name evidence="1" type="primary">tmcAL</name>
    <name type="ordered locus">MGAS9429_Spy0266</name>
</gene>
<protein>
    <recommendedName>
        <fullName evidence="1">tRNA(Met) cytidine acetate ligase</fullName>
        <ecNumber evidence="1">6.3.4.-</ecNumber>
    </recommendedName>
</protein>
<name>TMCAL_STRPC</name>
<proteinExistence type="inferred from homology"/>
<feature type="chain" id="PRO_0000300195" description="tRNA(Met) cytidine acetate ligase">
    <location>
        <begin position="1"/>
        <end position="368"/>
    </location>
</feature>
<feature type="binding site" evidence="1">
    <location>
        <begin position="7"/>
        <end position="20"/>
    </location>
    <ligand>
        <name>ATP</name>
        <dbReference type="ChEBI" id="CHEBI:30616"/>
    </ligand>
</feature>
<feature type="binding site" evidence="1">
    <location>
        <position position="96"/>
    </location>
    <ligand>
        <name>ATP</name>
        <dbReference type="ChEBI" id="CHEBI:30616"/>
    </ligand>
</feature>
<feature type="binding site" evidence="1">
    <location>
        <position position="152"/>
    </location>
    <ligand>
        <name>ATP</name>
        <dbReference type="ChEBI" id="CHEBI:30616"/>
    </ligand>
</feature>
<feature type="binding site" evidence="1">
    <location>
        <position position="175"/>
    </location>
    <ligand>
        <name>ATP</name>
        <dbReference type="ChEBI" id="CHEBI:30616"/>
    </ligand>
</feature>
<accession>Q1JNE5</accession>
<reference key="1">
    <citation type="journal article" date="2006" name="Proc. Natl. Acad. Sci. U.S.A.">
        <title>Molecular genetic anatomy of inter- and intraserotype variation in the human bacterial pathogen group A Streptococcus.</title>
        <authorList>
            <person name="Beres S.B."/>
            <person name="Richter E.W."/>
            <person name="Nagiec M.J."/>
            <person name="Sumby P."/>
            <person name="Porcella S.F."/>
            <person name="DeLeo F.R."/>
            <person name="Musser J.M."/>
        </authorList>
    </citation>
    <scope>NUCLEOTIDE SEQUENCE [LARGE SCALE GENOMIC DNA]</scope>
    <source>
        <strain>MGAS9429</strain>
    </source>
</reference>
<dbReference type="EC" id="6.3.4.-" evidence="1"/>
<dbReference type="EMBL" id="CP000259">
    <property type="protein sequence ID" value="ABF31454.1"/>
    <property type="molecule type" value="Genomic_DNA"/>
</dbReference>
<dbReference type="RefSeq" id="WP_002991082.1">
    <property type="nucleotide sequence ID" value="NC_008021.1"/>
</dbReference>
<dbReference type="SMR" id="Q1JNE5"/>
<dbReference type="KEGG" id="spk:MGAS9429_Spy0266"/>
<dbReference type="HOGENOM" id="CLU_038915_0_2_9"/>
<dbReference type="Proteomes" id="UP000002433">
    <property type="component" value="Chromosome"/>
</dbReference>
<dbReference type="GO" id="GO:0005737">
    <property type="term" value="C:cytoplasm"/>
    <property type="evidence" value="ECO:0007669"/>
    <property type="project" value="UniProtKB-SubCell"/>
</dbReference>
<dbReference type="GO" id="GO:0005524">
    <property type="term" value="F:ATP binding"/>
    <property type="evidence" value="ECO:0007669"/>
    <property type="project" value="UniProtKB-KW"/>
</dbReference>
<dbReference type="GO" id="GO:0016879">
    <property type="term" value="F:ligase activity, forming carbon-nitrogen bonds"/>
    <property type="evidence" value="ECO:0007669"/>
    <property type="project" value="UniProtKB-UniRule"/>
</dbReference>
<dbReference type="GO" id="GO:0000049">
    <property type="term" value="F:tRNA binding"/>
    <property type="evidence" value="ECO:0007669"/>
    <property type="project" value="UniProtKB-KW"/>
</dbReference>
<dbReference type="GO" id="GO:0006400">
    <property type="term" value="P:tRNA modification"/>
    <property type="evidence" value="ECO:0007669"/>
    <property type="project" value="UniProtKB-UniRule"/>
</dbReference>
<dbReference type="Gene3D" id="3.40.50.620">
    <property type="entry name" value="HUPs"/>
    <property type="match status" value="1"/>
</dbReference>
<dbReference type="HAMAP" id="MF_01539">
    <property type="entry name" value="TmcAL"/>
    <property type="match status" value="1"/>
</dbReference>
<dbReference type="InterPro" id="IPR014729">
    <property type="entry name" value="Rossmann-like_a/b/a_fold"/>
</dbReference>
<dbReference type="InterPro" id="IPR008513">
    <property type="entry name" value="tRNA(Met)_cyd_acetate_ligase"/>
</dbReference>
<dbReference type="NCBIfam" id="NF010191">
    <property type="entry name" value="PRK13670.1"/>
    <property type="match status" value="1"/>
</dbReference>
<dbReference type="PANTHER" id="PTHR37825">
    <property type="entry name" value="TRNA(MET) CYTIDINE ACETATE LIGASE"/>
    <property type="match status" value="1"/>
</dbReference>
<dbReference type="PANTHER" id="PTHR37825:SF1">
    <property type="entry name" value="TRNA(MET) CYTIDINE ACETATE LIGASE"/>
    <property type="match status" value="1"/>
</dbReference>
<dbReference type="Pfam" id="PF05636">
    <property type="entry name" value="HIGH_NTase1"/>
    <property type="match status" value="1"/>
</dbReference>
<dbReference type="SUPFAM" id="SSF52374">
    <property type="entry name" value="Nucleotidylyl transferase"/>
    <property type="match status" value="1"/>
</dbReference>
<sequence length="368" mass="41646">MTVTGIIAEFNPFHNGHKYLLETAEGLKIIAMSGNFMQRGEPALIDKWIRSEMALKNGADIVVELPFFVSVQSADYFAQGAIDILCQLGIQQLAFGTENVIDYQKLIKVYEKKSEQMTAYLSTLEDTLSYPQKTQKMWEIFAGVKFSGQTPNHILGLSYAKASAGKHIQLCPIKRQGAAYHSKDKNHLLASASAIRQHLNDWDFISHSVPNAGLLINNPHMSWDHYFSFLKYQILNHSDLTSIFQVNDELASRIKKAIKVSQNIDHLVDTVATKRYTKARVRRILTYILVNAKEPTLPKGIHILGFTSKGQAHLKKLKKSRPLITRIGAETWDEMTQKADSIYQLGHQDIPEQSFGRIPIIIKNERLN</sequence>
<comment type="function">
    <text evidence="1">Catalyzes the formation of N(4)-acetylcytidine (ac(4)C) at the wobble position of elongator tRNA(Met), using acetate and ATP as substrates. First activates an acetate ion to form acetyladenylate (Ac-AMP) and then transfers the acetyl group to tRNA to form ac(4)C34.</text>
</comment>
<comment type="catalytic activity">
    <reaction evidence="1">
        <text>cytidine(34) in elongator tRNA(Met) + acetate + ATP = N(4)-acetylcytidine(34) in elongator tRNA(Met) + AMP + diphosphate</text>
        <dbReference type="Rhea" id="RHEA:58144"/>
        <dbReference type="Rhea" id="RHEA-COMP:10693"/>
        <dbReference type="Rhea" id="RHEA-COMP:10694"/>
        <dbReference type="ChEBI" id="CHEBI:30089"/>
        <dbReference type="ChEBI" id="CHEBI:30616"/>
        <dbReference type="ChEBI" id="CHEBI:33019"/>
        <dbReference type="ChEBI" id="CHEBI:74900"/>
        <dbReference type="ChEBI" id="CHEBI:82748"/>
        <dbReference type="ChEBI" id="CHEBI:456215"/>
    </reaction>
</comment>
<comment type="subcellular location">
    <subcellularLocation>
        <location evidence="1">Cytoplasm</location>
    </subcellularLocation>
</comment>
<comment type="similarity">
    <text evidence="1">Belongs to the TmcAL family.</text>
</comment>
<organism>
    <name type="scientific">Streptococcus pyogenes serotype M12 (strain MGAS9429)</name>
    <dbReference type="NCBI Taxonomy" id="370551"/>
    <lineage>
        <taxon>Bacteria</taxon>
        <taxon>Bacillati</taxon>
        <taxon>Bacillota</taxon>
        <taxon>Bacilli</taxon>
        <taxon>Lactobacillales</taxon>
        <taxon>Streptococcaceae</taxon>
        <taxon>Streptococcus</taxon>
    </lineage>
</organism>
<evidence type="ECO:0000255" key="1">
    <source>
        <dbReference type="HAMAP-Rule" id="MF_01539"/>
    </source>
</evidence>
<keyword id="KW-0067">ATP-binding</keyword>
<keyword id="KW-0963">Cytoplasm</keyword>
<keyword id="KW-0436">Ligase</keyword>
<keyword id="KW-0547">Nucleotide-binding</keyword>
<keyword id="KW-0694">RNA-binding</keyword>
<keyword id="KW-0819">tRNA processing</keyword>
<keyword id="KW-0820">tRNA-binding</keyword>